<gene>
    <name evidence="1" type="primary">proB</name>
    <name type="ordered locus">MLBr01464</name>
</gene>
<comment type="function">
    <text evidence="1">Catalyzes the transfer of a phosphate group to glutamate to form L-glutamate 5-phosphate.</text>
</comment>
<comment type="catalytic activity">
    <reaction evidence="1">
        <text>L-glutamate + ATP = L-glutamyl 5-phosphate + ADP</text>
        <dbReference type="Rhea" id="RHEA:14877"/>
        <dbReference type="ChEBI" id="CHEBI:29985"/>
        <dbReference type="ChEBI" id="CHEBI:30616"/>
        <dbReference type="ChEBI" id="CHEBI:58274"/>
        <dbReference type="ChEBI" id="CHEBI:456216"/>
        <dbReference type="EC" id="2.7.2.11"/>
    </reaction>
</comment>
<comment type="pathway">
    <text evidence="1">Amino-acid biosynthesis; L-proline biosynthesis; L-glutamate 5-semialdehyde from L-glutamate: step 1/2.</text>
</comment>
<comment type="subcellular location">
    <subcellularLocation>
        <location evidence="1">Cytoplasm</location>
    </subcellularLocation>
</comment>
<comment type="similarity">
    <text evidence="1">Belongs to the glutamate 5-kinase family.</text>
</comment>
<feature type="chain" id="PRO_1000193700" description="Glutamate 5-kinase">
    <location>
        <begin position="1"/>
        <end position="367"/>
    </location>
</feature>
<feature type="domain" description="PUA" evidence="1">
    <location>
        <begin position="279"/>
        <end position="357"/>
    </location>
</feature>
<feature type="binding site" evidence="1">
    <location>
        <position position="17"/>
    </location>
    <ligand>
        <name>ATP</name>
        <dbReference type="ChEBI" id="CHEBI:30616"/>
    </ligand>
</feature>
<feature type="binding site" evidence="1">
    <location>
        <position position="57"/>
    </location>
    <ligand>
        <name>substrate</name>
    </ligand>
</feature>
<feature type="binding site" evidence="1">
    <location>
        <position position="144"/>
    </location>
    <ligand>
        <name>substrate</name>
    </ligand>
</feature>
<feature type="binding site" evidence="1">
    <location>
        <position position="156"/>
    </location>
    <ligand>
        <name>substrate</name>
    </ligand>
</feature>
<feature type="binding site" evidence="1">
    <location>
        <begin position="176"/>
        <end position="177"/>
    </location>
    <ligand>
        <name>ATP</name>
        <dbReference type="ChEBI" id="CHEBI:30616"/>
    </ligand>
</feature>
<feature type="binding site" evidence="1">
    <location>
        <begin position="217"/>
        <end position="223"/>
    </location>
    <ligand>
        <name>ATP</name>
        <dbReference type="ChEBI" id="CHEBI:30616"/>
    </ligand>
</feature>
<sequence>MSVHRDAIRAARSLVVKVGTNALTTSSGVFDSSRLARLVDAIEARMKAGTDVVIVSSGAIAAGIEPLGLSLRPKDLATKQAAASVGQVALVNSWSAAFARYGRAVGQVLLTAQDISMRVQHTNAQRTLDRLRALHAVAIVNENDTVATNEIRFGDNDRLSAVVAHLVGAEALVLLSDINGLYDSDPRKNTGARFVPEVTGSADLDGVVASRGSSLGTGGMVSKMSSALLAADAGVPVLLAAAADAATALTDASVGTVFAARPDRMSARRFWLRYAADSVGSLTLDEGAVWAVVQQRRSLLAAGITAVSGRFYGGDVVELRGPDATMVARGVVAYDATELAAMMGRSTSELPCELRRPAVHADDLVSI</sequence>
<keyword id="KW-0028">Amino-acid biosynthesis</keyword>
<keyword id="KW-0067">ATP-binding</keyword>
<keyword id="KW-0963">Cytoplasm</keyword>
<keyword id="KW-0418">Kinase</keyword>
<keyword id="KW-0547">Nucleotide-binding</keyword>
<keyword id="KW-0641">Proline biosynthesis</keyword>
<keyword id="KW-0808">Transferase</keyword>
<protein>
    <recommendedName>
        <fullName evidence="1">Glutamate 5-kinase</fullName>
        <ecNumber evidence="1">2.7.2.11</ecNumber>
    </recommendedName>
    <alternativeName>
        <fullName evidence="1">Gamma-glutamyl kinase</fullName>
        <shortName evidence="1">GK</shortName>
    </alternativeName>
</protein>
<organism>
    <name type="scientific">Mycobacterium leprae (strain Br4923)</name>
    <dbReference type="NCBI Taxonomy" id="561304"/>
    <lineage>
        <taxon>Bacteria</taxon>
        <taxon>Bacillati</taxon>
        <taxon>Actinomycetota</taxon>
        <taxon>Actinomycetes</taxon>
        <taxon>Mycobacteriales</taxon>
        <taxon>Mycobacteriaceae</taxon>
        <taxon>Mycobacterium</taxon>
    </lineage>
</organism>
<accession>B8ZRN2</accession>
<proteinExistence type="inferred from homology"/>
<name>PROB_MYCLB</name>
<reference key="1">
    <citation type="journal article" date="2009" name="Nat. Genet.">
        <title>Comparative genomic and phylogeographic analysis of Mycobacterium leprae.</title>
        <authorList>
            <person name="Monot M."/>
            <person name="Honore N."/>
            <person name="Garnier T."/>
            <person name="Zidane N."/>
            <person name="Sherafi D."/>
            <person name="Paniz-Mondolfi A."/>
            <person name="Matsuoka M."/>
            <person name="Taylor G.M."/>
            <person name="Donoghue H.D."/>
            <person name="Bouwman A."/>
            <person name="Mays S."/>
            <person name="Watson C."/>
            <person name="Lockwood D."/>
            <person name="Khamispour A."/>
            <person name="Dowlati Y."/>
            <person name="Jianping S."/>
            <person name="Rea T.H."/>
            <person name="Vera-Cabrera L."/>
            <person name="Stefani M.M."/>
            <person name="Banu S."/>
            <person name="Macdonald M."/>
            <person name="Sapkota B.R."/>
            <person name="Spencer J.S."/>
            <person name="Thomas J."/>
            <person name="Harshman K."/>
            <person name="Singh P."/>
            <person name="Busso P."/>
            <person name="Gattiker A."/>
            <person name="Rougemont J."/>
            <person name="Brennan P.J."/>
            <person name="Cole S.T."/>
        </authorList>
    </citation>
    <scope>NUCLEOTIDE SEQUENCE [LARGE SCALE GENOMIC DNA]</scope>
    <source>
        <strain>Br4923</strain>
    </source>
</reference>
<dbReference type="EC" id="2.7.2.11" evidence="1"/>
<dbReference type="EMBL" id="FM211192">
    <property type="protein sequence ID" value="CAR71558.1"/>
    <property type="molecule type" value="Genomic_DNA"/>
</dbReference>
<dbReference type="SMR" id="B8ZRN2"/>
<dbReference type="KEGG" id="mlb:MLBr01464"/>
<dbReference type="HOGENOM" id="CLU_025400_2_0_11"/>
<dbReference type="UniPathway" id="UPA00098">
    <property type="reaction ID" value="UER00359"/>
</dbReference>
<dbReference type="Proteomes" id="UP000006900">
    <property type="component" value="Chromosome"/>
</dbReference>
<dbReference type="GO" id="GO:0005829">
    <property type="term" value="C:cytosol"/>
    <property type="evidence" value="ECO:0007669"/>
    <property type="project" value="TreeGrafter"/>
</dbReference>
<dbReference type="GO" id="GO:0005524">
    <property type="term" value="F:ATP binding"/>
    <property type="evidence" value="ECO:0007669"/>
    <property type="project" value="UniProtKB-KW"/>
</dbReference>
<dbReference type="GO" id="GO:0004349">
    <property type="term" value="F:glutamate 5-kinase activity"/>
    <property type="evidence" value="ECO:0007669"/>
    <property type="project" value="UniProtKB-UniRule"/>
</dbReference>
<dbReference type="GO" id="GO:0003723">
    <property type="term" value="F:RNA binding"/>
    <property type="evidence" value="ECO:0007669"/>
    <property type="project" value="InterPro"/>
</dbReference>
<dbReference type="GO" id="GO:0055129">
    <property type="term" value="P:L-proline biosynthetic process"/>
    <property type="evidence" value="ECO:0007669"/>
    <property type="project" value="UniProtKB-UniRule"/>
</dbReference>
<dbReference type="CDD" id="cd04242">
    <property type="entry name" value="AAK_G5K_ProB"/>
    <property type="match status" value="1"/>
</dbReference>
<dbReference type="CDD" id="cd21157">
    <property type="entry name" value="PUA_G5K"/>
    <property type="match status" value="1"/>
</dbReference>
<dbReference type="FunFam" id="3.40.1160.10:FF:000018">
    <property type="entry name" value="Glutamate 5-kinase"/>
    <property type="match status" value="1"/>
</dbReference>
<dbReference type="Gene3D" id="3.40.1160.10">
    <property type="entry name" value="Acetylglutamate kinase-like"/>
    <property type="match status" value="1"/>
</dbReference>
<dbReference type="Gene3D" id="2.30.130.10">
    <property type="entry name" value="PUA domain"/>
    <property type="match status" value="1"/>
</dbReference>
<dbReference type="HAMAP" id="MF_00456">
    <property type="entry name" value="ProB"/>
    <property type="match status" value="1"/>
</dbReference>
<dbReference type="InterPro" id="IPR036393">
    <property type="entry name" value="AceGlu_kinase-like_sf"/>
</dbReference>
<dbReference type="InterPro" id="IPR001048">
    <property type="entry name" value="Asp/Glu/Uridylate_kinase"/>
</dbReference>
<dbReference type="InterPro" id="IPR041739">
    <property type="entry name" value="G5K_ProB"/>
</dbReference>
<dbReference type="InterPro" id="IPR001057">
    <property type="entry name" value="Glu/AcGlu_kinase"/>
</dbReference>
<dbReference type="InterPro" id="IPR011529">
    <property type="entry name" value="Glu_5kinase"/>
</dbReference>
<dbReference type="InterPro" id="IPR005715">
    <property type="entry name" value="Glu_5kinase/COase_Synthase"/>
</dbReference>
<dbReference type="InterPro" id="IPR019797">
    <property type="entry name" value="Glutamate_5-kinase_CS"/>
</dbReference>
<dbReference type="InterPro" id="IPR002478">
    <property type="entry name" value="PUA"/>
</dbReference>
<dbReference type="InterPro" id="IPR015947">
    <property type="entry name" value="PUA-like_sf"/>
</dbReference>
<dbReference type="InterPro" id="IPR036974">
    <property type="entry name" value="PUA_sf"/>
</dbReference>
<dbReference type="NCBIfam" id="TIGR01027">
    <property type="entry name" value="proB"/>
    <property type="match status" value="1"/>
</dbReference>
<dbReference type="PANTHER" id="PTHR43654">
    <property type="entry name" value="GLUTAMATE 5-KINASE"/>
    <property type="match status" value="1"/>
</dbReference>
<dbReference type="PANTHER" id="PTHR43654:SF1">
    <property type="entry name" value="ISOPENTENYL PHOSPHATE KINASE"/>
    <property type="match status" value="1"/>
</dbReference>
<dbReference type="Pfam" id="PF00696">
    <property type="entry name" value="AA_kinase"/>
    <property type="match status" value="1"/>
</dbReference>
<dbReference type="Pfam" id="PF01472">
    <property type="entry name" value="PUA"/>
    <property type="match status" value="1"/>
</dbReference>
<dbReference type="PIRSF" id="PIRSF000729">
    <property type="entry name" value="GK"/>
    <property type="match status" value="1"/>
</dbReference>
<dbReference type="PRINTS" id="PR00474">
    <property type="entry name" value="GLU5KINASE"/>
</dbReference>
<dbReference type="SMART" id="SM00359">
    <property type="entry name" value="PUA"/>
    <property type="match status" value="1"/>
</dbReference>
<dbReference type="SUPFAM" id="SSF53633">
    <property type="entry name" value="Carbamate kinase-like"/>
    <property type="match status" value="1"/>
</dbReference>
<dbReference type="SUPFAM" id="SSF88697">
    <property type="entry name" value="PUA domain-like"/>
    <property type="match status" value="1"/>
</dbReference>
<dbReference type="PROSITE" id="PS00902">
    <property type="entry name" value="GLUTAMATE_5_KINASE"/>
    <property type="match status" value="1"/>
</dbReference>
<dbReference type="PROSITE" id="PS50890">
    <property type="entry name" value="PUA"/>
    <property type="match status" value="1"/>
</dbReference>
<evidence type="ECO:0000255" key="1">
    <source>
        <dbReference type="HAMAP-Rule" id="MF_00456"/>
    </source>
</evidence>